<reference key="1">
    <citation type="journal article" date="2005" name="PLoS Genet.">
        <title>Life in hot carbon monoxide: the complete genome sequence of Carboxydothermus hydrogenoformans Z-2901.</title>
        <authorList>
            <person name="Wu M."/>
            <person name="Ren Q."/>
            <person name="Durkin A.S."/>
            <person name="Daugherty S.C."/>
            <person name="Brinkac L.M."/>
            <person name="Dodson R.J."/>
            <person name="Madupu R."/>
            <person name="Sullivan S.A."/>
            <person name="Kolonay J.F."/>
            <person name="Nelson W.C."/>
            <person name="Tallon L.J."/>
            <person name="Jones K.M."/>
            <person name="Ulrich L.E."/>
            <person name="Gonzalez J.M."/>
            <person name="Zhulin I.B."/>
            <person name="Robb F.T."/>
            <person name="Eisen J.A."/>
        </authorList>
    </citation>
    <scope>NUCLEOTIDE SEQUENCE [LARGE SCALE GENOMIC DNA]</scope>
    <source>
        <strain>ATCC BAA-161 / DSM 6008 / Z-2901</strain>
    </source>
</reference>
<proteinExistence type="inferred from homology"/>
<gene>
    <name evidence="1" type="primary">deoB</name>
    <name type="ordered locus">CHY_1963</name>
</gene>
<dbReference type="EC" id="5.4.2.7" evidence="1"/>
<dbReference type="EMBL" id="CP000141">
    <property type="protein sequence ID" value="ABB15249.1"/>
    <property type="molecule type" value="Genomic_DNA"/>
</dbReference>
<dbReference type="RefSeq" id="WP_011344855.1">
    <property type="nucleotide sequence ID" value="NC_007503.1"/>
</dbReference>
<dbReference type="SMR" id="Q3AAQ2"/>
<dbReference type="FunCoup" id="Q3AAQ2">
    <property type="interactions" value="52"/>
</dbReference>
<dbReference type="STRING" id="246194.CHY_1963"/>
<dbReference type="KEGG" id="chy:CHY_1963"/>
<dbReference type="eggNOG" id="COG1015">
    <property type="taxonomic scope" value="Bacteria"/>
</dbReference>
<dbReference type="HOGENOM" id="CLU_053861_0_0_9"/>
<dbReference type="InParanoid" id="Q3AAQ2"/>
<dbReference type="OrthoDB" id="9769930at2"/>
<dbReference type="UniPathway" id="UPA00002">
    <property type="reaction ID" value="UER00467"/>
</dbReference>
<dbReference type="Proteomes" id="UP000002706">
    <property type="component" value="Chromosome"/>
</dbReference>
<dbReference type="GO" id="GO:0005829">
    <property type="term" value="C:cytosol"/>
    <property type="evidence" value="ECO:0007669"/>
    <property type="project" value="TreeGrafter"/>
</dbReference>
<dbReference type="GO" id="GO:0000287">
    <property type="term" value="F:magnesium ion binding"/>
    <property type="evidence" value="ECO:0007669"/>
    <property type="project" value="InterPro"/>
</dbReference>
<dbReference type="GO" id="GO:0030145">
    <property type="term" value="F:manganese ion binding"/>
    <property type="evidence" value="ECO:0007669"/>
    <property type="project" value="UniProtKB-UniRule"/>
</dbReference>
<dbReference type="GO" id="GO:0008973">
    <property type="term" value="F:phosphopentomutase activity"/>
    <property type="evidence" value="ECO:0007669"/>
    <property type="project" value="UniProtKB-UniRule"/>
</dbReference>
<dbReference type="GO" id="GO:0006018">
    <property type="term" value="P:2-deoxyribose 1-phosphate catabolic process"/>
    <property type="evidence" value="ECO:0007669"/>
    <property type="project" value="UniProtKB-UniRule"/>
</dbReference>
<dbReference type="GO" id="GO:0006015">
    <property type="term" value="P:5-phosphoribose 1-diphosphate biosynthetic process"/>
    <property type="evidence" value="ECO:0007669"/>
    <property type="project" value="UniProtKB-UniPathway"/>
</dbReference>
<dbReference type="GO" id="GO:0043094">
    <property type="term" value="P:metabolic compound salvage"/>
    <property type="evidence" value="ECO:0007669"/>
    <property type="project" value="InterPro"/>
</dbReference>
<dbReference type="GO" id="GO:0009117">
    <property type="term" value="P:nucleotide metabolic process"/>
    <property type="evidence" value="ECO:0007669"/>
    <property type="project" value="InterPro"/>
</dbReference>
<dbReference type="CDD" id="cd16009">
    <property type="entry name" value="PPM"/>
    <property type="match status" value="1"/>
</dbReference>
<dbReference type="FunFam" id="3.30.70.1250:FF:000001">
    <property type="entry name" value="Phosphopentomutase"/>
    <property type="match status" value="1"/>
</dbReference>
<dbReference type="Gene3D" id="3.40.720.10">
    <property type="entry name" value="Alkaline Phosphatase, subunit A"/>
    <property type="match status" value="1"/>
</dbReference>
<dbReference type="Gene3D" id="3.30.70.1250">
    <property type="entry name" value="Phosphopentomutase"/>
    <property type="match status" value="1"/>
</dbReference>
<dbReference type="HAMAP" id="MF_00740">
    <property type="entry name" value="Phosphopentomut"/>
    <property type="match status" value="1"/>
</dbReference>
<dbReference type="InterPro" id="IPR017850">
    <property type="entry name" value="Alkaline_phosphatase_core_sf"/>
</dbReference>
<dbReference type="InterPro" id="IPR010045">
    <property type="entry name" value="DeoB"/>
</dbReference>
<dbReference type="InterPro" id="IPR006124">
    <property type="entry name" value="Metalloenzyme"/>
</dbReference>
<dbReference type="InterPro" id="IPR024052">
    <property type="entry name" value="Phosphopentomutase_DeoB_cap_sf"/>
</dbReference>
<dbReference type="NCBIfam" id="TIGR01696">
    <property type="entry name" value="deoB"/>
    <property type="match status" value="1"/>
</dbReference>
<dbReference type="NCBIfam" id="NF003766">
    <property type="entry name" value="PRK05362.1"/>
    <property type="match status" value="1"/>
</dbReference>
<dbReference type="PANTHER" id="PTHR21110">
    <property type="entry name" value="PHOSPHOPENTOMUTASE"/>
    <property type="match status" value="1"/>
</dbReference>
<dbReference type="PANTHER" id="PTHR21110:SF0">
    <property type="entry name" value="PHOSPHOPENTOMUTASE"/>
    <property type="match status" value="1"/>
</dbReference>
<dbReference type="Pfam" id="PF01676">
    <property type="entry name" value="Metalloenzyme"/>
    <property type="match status" value="1"/>
</dbReference>
<dbReference type="PIRSF" id="PIRSF001491">
    <property type="entry name" value="Ppentomutase"/>
    <property type="match status" value="1"/>
</dbReference>
<dbReference type="SUPFAM" id="SSF53649">
    <property type="entry name" value="Alkaline phosphatase-like"/>
    <property type="match status" value="1"/>
</dbReference>
<dbReference type="SUPFAM" id="SSF143856">
    <property type="entry name" value="DeoB insert domain-like"/>
    <property type="match status" value="1"/>
</dbReference>
<accession>Q3AAQ2</accession>
<comment type="function">
    <text evidence="1">Isomerase that catalyzes the conversion of deoxy-ribose 1-phosphate (dRib-1-P) and ribose 1-phosphate (Rib-1-P) to deoxy-ribose 5-phosphate (dRib-5-P) and ribose 5-phosphate (Rib-5-P), respectively.</text>
</comment>
<comment type="catalytic activity">
    <reaction evidence="1">
        <text>2-deoxy-alpha-D-ribose 1-phosphate = 2-deoxy-D-ribose 5-phosphate</text>
        <dbReference type="Rhea" id="RHEA:27658"/>
        <dbReference type="ChEBI" id="CHEBI:57259"/>
        <dbReference type="ChEBI" id="CHEBI:62877"/>
        <dbReference type="EC" id="5.4.2.7"/>
    </reaction>
</comment>
<comment type="catalytic activity">
    <reaction evidence="1">
        <text>alpha-D-ribose 1-phosphate = D-ribose 5-phosphate</text>
        <dbReference type="Rhea" id="RHEA:18793"/>
        <dbReference type="ChEBI" id="CHEBI:57720"/>
        <dbReference type="ChEBI" id="CHEBI:78346"/>
        <dbReference type="EC" id="5.4.2.7"/>
    </reaction>
</comment>
<comment type="cofactor">
    <cofactor evidence="1">
        <name>Mn(2+)</name>
        <dbReference type="ChEBI" id="CHEBI:29035"/>
    </cofactor>
    <text evidence="1">Binds 2 manganese ions.</text>
</comment>
<comment type="pathway">
    <text evidence="1">Carbohydrate degradation; 2-deoxy-D-ribose 1-phosphate degradation; D-glyceraldehyde 3-phosphate and acetaldehyde from 2-deoxy-alpha-D-ribose 1-phosphate: step 1/2.</text>
</comment>
<comment type="subcellular location">
    <subcellularLocation>
        <location evidence="1">Cytoplasm</location>
    </subcellularLocation>
</comment>
<comment type="similarity">
    <text evidence="1">Belongs to the phosphopentomutase family.</text>
</comment>
<protein>
    <recommendedName>
        <fullName evidence="1">Phosphopentomutase</fullName>
        <ecNumber evidence="1">5.4.2.7</ecNumber>
    </recommendedName>
    <alternativeName>
        <fullName evidence="1">Phosphodeoxyribomutase</fullName>
    </alternativeName>
</protein>
<name>DEOB_CARHZ</name>
<evidence type="ECO:0000255" key="1">
    <source>
        <dbReference type="HAMAP-Rule" id="MF_00740"/>
    </source>
</evidence>
<feature type="chain" id="PRO_0000258276" description="Phosphopentomutase">
    <location>
        <begin position="1"/>
        <end position="388"/>
    </location>
</feature>
<feature type="binding site" evidence="1">
    <location>
        <position position="10"/>
    </location>
    <ligand>
        <name>Mn(2+)</name>
        <dbReference type="ChEBI" id="CHEBI:29035"/>
        <label>1</label>
    </ligand>
</feature>
<feature type="binding site" evidence="1">
    <location>
        <position position="282"/>
    </location>
    <ligand>
        <name>Mn(2+)</name>
        <dbReference type="ChEBI" id="CHEBI:29035"/>
        <label>2</label>
    </ligand>
</feature>
<feature type="binding site" evidence="1">
    <location>
        <position position="287"/>
    </location>
    <ligand>
        <name>Mn(2+)</name>
        <dbReference type="ChEBI" id="CHEBI:29035"/>
        <label>2</label>
    </ligand>
</feature>
<feature type="binding site" evidence="1">
    <location>
        <position position="323"/>
    </location>
    <ligand>
        <name>Mn(2+)</name>
        <dbReference type="ChEBI" id="CHEBI:29035"/>
        <label>1</label>
    </ligand>
</feature>
<feature type="binding site" evidence="1">
    <location>
        <position position="324"/>
    </location>
    <ligand>
        <name>Mn(2+)</name>
        <dbReference type="ChEBI" id="CHEBI:29035"/>
        <label>1</label>
    </ligand>
</feature>
<feature type="binding site" evidence="1">
    <location>
        <position position="335"/>
    </location>
    <ligand>
        <name>Mn(2+)</name>
        <dbReference type="ChEBI" id="CHEBI:29035"/>
        <label>2</label>
    </ligand>
</feature>
<organism>
    <name type="scientific">Carboxydothermus hydrogenoformans (strain ATCC BAA-161 / DSM 6008 / Z-2901)</name>
    <dbReference type="NCBI Taxonomy" id="246194"/>
    <lineage>
        <taxon>Bacteria</taxon>
        <taxon>Bacillati</taxon>
        <taxon>Bacillota</taxon>
        <taxon>Clostridia</taxon>
        <taxon>Thermoanaerobacterales</taxon>
        <taxon>Thermoanaerobacteraceae</taxon>
        <taxon>Carboxydothermus</taxon>
    </lineage>
</organism>
<keyword id="KW-0963">Cytoplasm</keyword>
<keyword id="KW-0413">Isomerase</keyword>
<keyword id="KW-0464">Manganese</keyword>
<keyword id="KW-0479">Metal-binding</keyword>
<keyword id="KW-1185">Reference proteome</keyword>
<sequence length="388" mass="42873">MKRVVLIVLDSVGIGELPDAHLYGDEGSNTLANTAKKVGGFELPNLEKLGLGKIHPILGLKGDIKALGAYGKMGEKSPGKDTTTGHWEICGLILEKPFPVYPNGFPEDLIKRFEEAIGRKTLGNKPASGTAIIEELGEEHMRTGYPIVYTSADSVFQIAAHEEVIPLEELYKMCKIARGLLTGEHAVGRVIARPFTGTPGNFKRTANRHDYSLEPTGKTVLDKLVEQGYEVLGVGKIYDIFAGRGLTWHESTKNNEDGLVKTVNLLYKDFTGLLFTNLVDFDMVYGHRNNAEGYYEALKQFDSYLPKIMEKLREDDLLIITADHGCDPTTPSTDHSREYVPLLVYGHSIKEDVNLGTRETFADVAATLEEIFGLEPGIGQSFWGEIRK</sequence>